<keyword id="KW-0131">Cell cycle</keyword>
<keyword id="KW-0132">Cell division</keyword>
<keyword id="KW-0717">Septation</keyword>
<gene>
    <name evidence="1" type="primary">minC</name>
    <name type="ordered locus">ECUMN_1465</name>
</gene>
<accession>B7N3Y0</accession>
<evidence type="ECO:0000255" key="1">
    <source>
        <dbReference type="HAMAP-Rule" id="MF_00267"/>
    </source>
</evidence>
<evidence type="ECO:0000256" key="2">
    <source>
        <dbReference type="SAM" id="MobiDB-lite"/>
    </source>
</evidence>
<comment type="function">
    <text evidence="1">Cell division inhibitor that blocks the formation of polar Z ring septums. Rapidly oscillates between the poles of the cell to destabilize FtsZ filaments that have formed before they mature into polar Z rings. Prevents FtsZ polymerization.</text>
</comment>
<comment type="subunit">
    <text evidence="1">Interacts with MinD and FtsZ.</text>
</comment>
<comment type="similarity">
    <text evidence="1">Belongs to the MinC family.</text>
</comment>
<organism>
    <name type="scientific">Escherichia coli O17:K52:H18 (strain UMN026 / ExPEC)</name>
    <dbReference type="NCBI Taxonomy" id="585056"/>
    <lineage>
        <taxon>Bacteria</taxon>
        <taxon>Pseudomonadati</taxon>
        <taxon>Pseudomonadota</taxon>
        <taxon>Gammaproteobacteria</taxon>
        <taxon>Enterobacterales</taxon>
        <taxon>Enterobacteriaceae</taxon>
        <taxon>Escherichia</taxon>
    </lineage>
</organism>
<feature type="chain" id="PRO_1000191246" description="Probable septum site-determining protein MinC">
    <location>
        <begin position="1"/>
        <end position="231"/>
    </location>
</feature>
<feature type="region of interest" description="Disordered" evidence="2">
    <location>
        <begin position="102"/>
        <end position="125"/>
    </location>
</feature>
<name>MINC_ECOLU</name>
<sequence length="231" mass="24745">MSNTPIELKGSSFTLSVVHLHEAEPKVIHQALEDKIAQAPAFLKHAPVVLNVSALEDPVNWSAMHKAVSATGLRVIGVSGCKDAQLKAEIEKMGLPILTEGKEKAPRPAPAPQAPAQNTTPVTKTRLIDTPVRSGQRIYAPQCDLIVTSHVSAGAELIADGNIHVYGMMRGRALAGASGDRETQIFCTNLMAELVSIAGEYWLSDQIPAEFYGKAARLQLVENALTVQPLN</sequence>
<protein>
    <recommendedName>
        <fullName evidence="1">Probable septum site-determining protein MinC</fullName>
    </recommendedName>
</protein>
<dbReference type="EMBL" id="CU928163">
    <property type="protein sequence ID" value="CAR12673.1"/>
    <property type="molecule type" value="Genomic_DNA"/>
</dbReference>
<dbReference type="RefSeq" id="WP_000072536.1">
    <property type="nucleotide sequence ID" value="NC_011751.1"/>
</dbReference>
<dbReference type="RefSeq" id="YP_002412210.1">
    <property type="nucleotide sequence ID" value="NC_011751.1"/>
</dbReference>
<dbReference type="SMR" id="B7N3Y0"/>
<dbReference type="STRING" id="585056.ECUMN_1465"/>
<dbReference type="GeneID" id="93776258"/>
<dbReference type="KEGG" id="eum:ECUMN_1465"/>
<dbReference type="PATRIC" id="fig|585056.7.peg.1660"/>
<dbReference type="HOGENOM" id="CLU_067812_0_1_6"/>
<dbReference type="Proteomes" id="UP000007097">
    <property type="component" value="Chromosome"/>
</dbReference>
<dbReference type="GO" id="GO:0000902">
    <property type="term" value="P:cell morphogenesis"/>
    <property type="evidence" value="ECO:0007669"/>
    <property type="project" value="InterPro"/>
</dbReference>
<dbReference type="GO" id="GO:0000917">
    <property type="term" value="P:division septum assembly"/>
    <property type="evidence" value="ECO:0007669"/>
    <property type="project" value="UniProtKB-KW"/>
</dbReference>
<dbReference type="GO" id="GO:0051302">
    <property type="term" value="P:regulation of cell division"/>
    <property type="evidence" value="ECO:0007669"/>
    <property type="project" value="InterPro"/>
</dbReference>
<dbReference type="GO" id="GO:1901891">
    <property type="term" value="P:regulation of cell septum assembly"/>
    <property type="evidence" value="ECO:0007669"/>
    <property type="project" value="InterPro"/>
</dbReference>
<dbReference type="FunFam" id="2.160.20.70:FF:000002">
    <property type="entry name" value="Probable septum site-determining protein MinC"/>
    <property type="match status" value="1"/>
</dbReference>
<dbReference type="Gene3D" id="2.160.20.70">
    <property type="match status" value="1"/>
</dbReference>
<dbReference type="Gene3D" id="3.30.70.260">
    <property type="match status" value="1"/>
</dbReference>
<dbReference type="HAMAP" id="MF_00267">
    <property type="entry name" value="MinC"/>
    <property type="match status" value="1"/>
</dbReference>
<dbReference type="InterPro" id="IPR016098">
    <property type="entry name" value="CAP/MinC_C"/>
</dbReference>
<dbReference type="InterPro" id="IPR013033">
    <property type="entry name" value="MinC"/>
</dbReference>
<dbReference type="InterPro" id="IPR036145">
    <property type="entry name" value="MinC_C_sf"/>
</dbReference>
<dbReference type="InterPro" id="IPR007874">
    <property type="entry name" value="MinC_N"/>
</dbReference>
<dbReference type="InterPro" id="IPR005526">
    <property type="entry name" value="Septum_form_inhib_MinC_C"/>
</dbReference>
<dbReference type="NCBIfam" id="TIGR01222">
    <property type="entry name" value="minC"/>
    <property type="match status" value="1"/>
</dbReference>
<dbReference type="PANTHER" id="PTHR34108">
    <property type="entry name" value="SEPTUM SITE-DETERMINING PROTEIN MINC"/>
    <property type="match status" value="1"/>
</dbReference>
<dbReference type="PANTHER" id="PTHR34108:SF1">
    <property type="entry name" value="SEPTUM SITE-DETERMINING PROTEIN MINC"/>
    <property type="match status" value="1"/>
</dbReference>
<dbReference type="Pfam" id="PF03775">
    <property type="entry name" value="MinC_C"/>
    <property type="match status" value="1"/>
</dbReference>
<dbReference type="Pfam" id="PF05209">
    <property type="entry name" value="MinC_N"/>
    <property type="match status" value="1"/>
</dbReference>
<dbReference type="SUPFAM" id="SSF63848">
    <property type="entry name" value="Cell-division inhibitor MinC, C-terminal domain"/>
    <property type="match status" value="1"/>
</dbReference>
<reference key="1">
    <citation type="journal article" date="2009" name="PLoS Genet.">
        <title>Organised genome dynamics in the Escherichia coli species results in highly diverse adaptive paths.</title>
        <authorList>
            <person name="Touchon M."/>
            <person name="Hoede C."/>
            <person name="Tenaillon O."/>
            <person name="Barbe V."/>
            <person name="Baeriswyl S."/>
            <person name="Bidet P."/>
            <person name="Bingen E."/>
            <person name="Bonacorsi S."/>
            <person name="Bouchier C."/>
            <person name="Bouvet O."/>
            <person name="Calteau A."/>
            <person name="Chiapello H."/>
            <person name="Clermont O."/>
            <person name="Cruveiller S."/>
            <person name="Danchin A."/>
            <person name="Diard M."/>
            <person name="Dossat C."/>
            <person name="Karoui M.E."/>
            <person name="Frapy E."/>
            <person name="Garry L."/>
            <person name="Ghigo J.M."/>
            <person name="Gilles A.M."/>
            <person name="Johnson J."/>
            <person name="Le Bouguenec C."/>
            <person name="Lescat M."/>
            <person name="Mangenot S."/>
            <person name="Martinez-Jehanne V."/>
            <person name="Matic I."/>
            <person name="Nassif X."/>
            <person name="Oztas S."/>
            <person name="Petit M.A."/>
            <person name="Pichon C."/>
            <person name="Rouy Z."/>
            <person name="Ruf C.S."/>
            <person name="Schneider D."/>
            <person name="Tourret J."/>
            <person name="Vacherie B."/>
            <person name="Vallenet D."/>
            <person name="Medigue C."/>
            <person name="Rocha E.P.C."/>
            <person name="Denamur E."/>
        </authorList>
    </citation>
    <scope>NUCLEOTIDE SEQUENCE [LARGE SCALE GENOMIC DNA]</scope>
    <source>
        <strain>UMN026 / ExPEC</strain>
    </source>
</reference>
<proteinExistence type="inferred from homology"/>